<sequence>MTLNGGSGASGSRGAGGRERDRRRGSTPWGPAPPLHRRSMPVDERDLQAALAPGSLATTAAGTRTQGQRLDWPEGSSDSLSSGGSGSEEGVYKVLLLGAPGVGKSALARIFGGIEDGPEAEAAGHTYDRSITVDGEEASLLVYDIWEEDGGCWLPGHCMAMGDAYVIVYSITDKGSFEKASELRVQLRRARQTDDVPIILVGNKSDLVRSREVSVDEGRACAVVFDCKFIETSAALHHNVQALFEGVVRQIRLRRDSKEDNARRQAGTRRRESLGKKAKRFLGRIVARNSRKMAFRAKSKSCHDLSVL</sequence>
<accession>O88667</accession>
<organism>
    <name type="scientific">Mus musculus</name>
    <name type="common">Mouse</name>
    <dbReference type="NCBI Taxonomy" id="10090"/>
    <lineage>
        <taxon>Eukaryota</taxon>
        <taxon>Metazoa</taxon>
        <taxon>Chordata</taxon>
        <taxon>Craniata</taxon>
        <taxon>Vertebrata</taxon>
        <taxon>Euteleostomi</taxon>
        <taxon>Mammalia</taxon>
        <taxon>Eutheria</taxon>
        <taxon>Euarchontoglires</taxon>
        <taxon>Glires</taxon>
        <taxon>Rodentia</taxon>
        <taxon>Myomorpha</taxon>
        <taxon>Muroidea</taxon>
        <taxon>Muridae</taxon>
        <taxon>Murinae</taxon>
        <taxon>Mus</taxon>
        <taxon>Mus</taxon>
    </lineage>
</organism>
<comment type="function">
    <text evidence="2 4 5 6">May regulate basal voltage-dependent L-type Ca(2+) currents and be required for beta-adrenergic augmentation of Ca(2+) influx in cardiomyocytes, thereby regulating increases in heart rate and contractile force (PubMed:36424916). May play an important role in cardiac antiarrhythmia via the strong suppression of voltage-dependent L-type Ca(2+) currents (PubMed:17525370). Regulates voltage-gated L-type calcium channel subunit alpha-1C trafficking to the cell membrane (PubMed:17525370). Inhibits cardiac hypertrophy through the calmodulin-dependent kinase II (CaMKII) pathway (PubMed:18056528). Inhibits phosphorylation and activation of CAMK2D (By similarity).</text>
</comment>
<comment type="subunit">
    <text evidence="2 4 5 6">Interacts with Calmodulin preferentially in the inactive, GDP-bound form (PubMed:18056528). Interacts with CAMK2D (By similarity). Interacts with CACNB2; interaction may be involved in beta-adrenergic regulation of heart rate and contractile force (PubMed:17525370, PubMed:36424916). Interaction with CACNB2 regulates the trafficking of CACNA1C to the cell membrane (PubMed:17525370).</text>
</comment>
<comment type="subcellular location">
    <subcellularLocation>
        <location evidence="4">Cell membrane</location>
    </subcellularLocation>
</comment>
<comment type="PTM">
    <text evidence="6">Phosphorylation at Ser-26, Ser-39, Ser-273 and Ser-301 may be involved in regulating inhibition of voltage-gated L-type Ca(2+) channels.</text>
</comment>
<comment type="disruption phenotype">
    <text evidence="5">Mice show increased susceptibility to thoracic transverse aortic constriction (TAC)-induced cardiac hypertrophy. TAC-induced CAMKII phosphorylation in the heart is also significantly increased.</text>
</comment>
<comment type="similarity">
    <text evidence="7">Belongs to the small GTPase superfamily. RGK family.</text>
</comment>
<gene>
    <name type="primary">Rrad</name>
</gene>
<protein>
    <recommendedName>
        <fullName>GTP-binding protein RAD</fullName>
    </recommendedName>
</protein>
<feature type="chain" id="PRO_0000122479" description="GTP-binding protein RAD">
    <location>
        <begin position="1"/>
        <end position="308"/>
    </location>
</feature>
<feature type="region of interest" description="Disordered" evidence="3">
    <location>
        <begin position="1"/>
        <end position="86"/>
    </location>
</feature>
<feature type="region of interest" description="Calmodulin-binding" evidence="1">
    <location>
        <begin position="278"/>
        <end position="297"/>
    </location>
</feature>
<feature type="compositionally biased region" description="Gly residues" evidence="3">
    <location>
        <begin position="1"/>
        <end position="15"/>
    </location>
</feature>
<feature type="compositionally biased region" description="Low complexity" evidence="3">
    <location>
        <begin position="57"/>
        <end position="82"/>
    </location>
</feature>
<feature type="binding site" evidence="1">
    <location>
        <begin position="98"/>
        <end position="105"/>
    </location>
    <ligand>
        <name>GTP</name>
        <dbReference type="ChEBI" id="CHEBI:37565"/>
    </ligand>
</feature>
<feature type="binding site" evidence="1">
    <location>
        <begin position="203"/>
        <end position="206"/>
    </location>
    <ligand>
        <name>GTP</name>
        <dbReference type="ChEBI" id="CHEBI:37565"/>
    </ligand>
</feature>
<feature type="modified residue" description="Omega-N-methylarginine" evidence="9">
    <location>
        <position position="24"/>
    </location>
</feature>
<feature type="modified residue" description="Phosphoserine" evidence="8">
    <location>
        <position position="26"/>
    </location>
</feature>
<feature type="mutagenesis site" description="Reduces amplitude of peak Ca(2+) current induced in ventricular and atrial cardiomyocytes by nonselective beta-adrenoreceptor agonist isoproterenol; however, basal electrophysiological properties of Ca(2+) channels did not differ; when associated with A-39; A-273 and A-301." evidence="6">
    <original>S</original>
    <variation>A</variation>
    <location>
        <position position="26"/>
    </location>
</feature>
<feature type="mutagenesis site" description="Reduces amplitude of peak Ca(2+) current induced in ventricular and atrial cardiomyocytes by nonselective beta-adrenoreceptor agonist isoproterenol; however, basal electrophysiological properties of Ca(2+) channels did not differ; when associated with A-26; A-273 and A-301." evidence="6">
    <original>S</original>
    <variation>A</variation>
    <location>
        <position position="39"/>
    </location>
</feature>
<feature type="mutagenesis site" description="Loss of interaction with CACNB2. QT prolongation and ventricular arrhythmias, caused by the augmentation of L-type Ca(2+) channels in the heart." evidence="4">
    <original>S</original>
    <variation>A</variation>
    <location>
        <position position="105"/>
    </location>
</feature>
<feature type="mutagenesis site" description="Reduces amplitude of peak Ca(2+) current induced in ventricular and atrial cardiomyocytes by nonselective beta-adrenoreceptor agonist isoproterenol; however, basal electrophysiological properties of Ca(2+) channels did not differ; when associated with A-26; A-39 and A-301." evidence="6">
    <original>S</original>
    <variation>A</variation>
    <location>
        <position position="273"/>
    </location>
</feature>
<feature type="mutagenesis site" description="Reduces amplitude of peak Ca(2+) current induced in ventricular and atrial cardiomyocytes by nonselective beta-adrenoreceptor agonist isoproterenol; however, basal electrophysiological properties of Ca(2+) channels did not differ; when associated with A-26; A-39 and A-273." evidence="6">
    <original>S</original>
    <variation>A</variation>
    <location>
        <position position="301"/>
    </location>
</feature>
<keyword id="KW-0112">Calmodulin-binding</keyword>
<keyword id="KW-1003">Cell membrane</keyword>
<keyword id="KW-0342">GTP-binding</keyword>
<keyword id="KW-0472">Membrane</keyword>
<keyword id="KW-0488">Methylation</keyword>
<keyword id="KW-0547">Nucleotide-binding</keyword>
<keyword id="KW-0597">Phosphoprotein</keyword>
<keyword id="KW-1185">Reference proteome</keyword>
<dbReference type="EMBL" id="AF084466">
    <property type="protein sequence ID" value="AAC33133.1"/>
    <property type="molecule type" value="mRNA"/>
</dbReference>
<dbReference type="SMR" id="O88667"/>
<dbReference type="FunCoup" id="O88667">
    <property type="interactions" value="926"/>
</dbReference>
<dbReference type="IntAct" id="O88667">
    <property type="interactions" value="1"/>
</dbReference>
<dbReference type="MINT" id="O88667"/>
<dbReference type="STRING" id="10090.ENSMUSP00000034351"/>
<dbReference type="GlyGen" id="O88667">
    <property type="glycosylation" value="1 site, 1 O-linked glycan (1 site)"/>
</dbReference>
<dbReference type="iPTMnet" id="O88667"/>
<dbReference type="PhosphoSitePlus" id="O88667"/>
<dbReference type="PaxDb" id="10090-ENSMUSP00000034351"/>
<dbReference type="ProteomicsDB" id="255075"/>
<dbReference type="AGR" id="MGI:1930943"/>
<dbReference type="MGI" id="MGI:1930943">
    <property type="gene designation" value="Rrad"/>
</dbReference>
<dbReference type="eggNOG" id="KOG0395">
    <property type="taxonomic scope" value="Eukaryota"/>
</dbReference>
<dbReference type="InParanoid" id="O88667"/>
<dbReference type="PhylomeDB" id="O88667"/>
<dbReference type="PRO" id="PR:O88667"/>
<dbReference type="Proteomes" id="UP000000589">
    <property type="component" value="Unplaced"/>
</dbReference>
<dbReference type="RNAct" id="O88667">
    <property type="molecule type" value="protein"/>
</dbReference>
<dbReference type="GO" id="GO:0005886">
    <property type="term" value="C:plasma membrane"/>
    <property type="evidence" value="ECO:0000314"/>
    <property type="project" value="UniProtKB"/>
</dbReference>
<dbReference type="GO" id="GO:0030315">
    <property type="term" value="C:T-tubule"/>
    <property type="evidence" value="ECO:0000314"/>
    <property type="project" value="MGI"/>
</dbReference>
<dbReference type="GO" id="GO:0005516">
    <property type="term" value="F:calmodulin binding"/>
    <property type="evidence" value="ECO:0007669"/>
    <property type="project" value="UniProtKB-KW"/>
</dbReference>
<dbReference type="GO" id="GO:0005525">
    <property type="term" value="F:GTP binding"/>
    <property type="evidence" value="ECO:0007669"/>
    <property type="project" value="UniProtKB-KW"/>
</dbReference>
<dbReference type="GO" id="GO:0003924">
    <property type="term" value="F:GTPase activity"/>
    <property type="evidence" value="ECO:0007669"/>
    <property type="project" value="InterPro"/>
</dbReference>
<dbReference type="CDD" id="cd04148">
    <property type="entry name" value="RGK"/>
    <property type="match status" value="1"/>
</dbReference>
<dbReference type="FunFam" id="3.40.50.300:FF:000311">
    <property type="entry name" value="GTP-binding protein RAD"/>
    <property type="match status" value="1"/>
</dbReference>
<dbReference type="Gene3D" id="3.40.50.300">
    <property type="entry name" value="P-loop containing nucleotide triphosphate hydrolases"/>
    <property type="match status" value="1"/>
</dbReference>
<dbReference type="InterPro" id="IPR027417">
    <property type="entry name" value="P-loop_NTPase"/>
</dbReference>
<dbReference type="InterPro" id="IPR017358">
    <property type="entry name" value="RGK"/>
</dbReference>
<dbReference type="InterPro" id="IPR051641">
    <property type="entry name" value="RGK_GTP-binding_reg"/>
</dbReference>
<dbReference type="InterPro" id="IPR001806">
    <property type="entry name" value="Small_GTPase"/>
</dbReference>
<dbReference type="PANTHER" id="PTHR45775:SF3">
    <property type="entry name" value="GTP-BINDING PROTEIN RAD"/>
    <property type="match status" value="1"/>
</dbReference>
<dbReference type="PANTHER" id="PTHR45775">
    <property type="entry name" value="RAD, GEM/KIR FAMILY MEMBER 2, ISOFORM C"/>
    <property type="match status" value="1"/>
</dbReference>
<dbReference type="Pfam" id="PF00071">
    <property type="entry name" value="Ras"/>
    <property type="match status" value="1"/>
</dbReference>
<dbReference type="PIRSF" id="PIRSF038017">
    <property type="entry name" value="GTP-binding_GEM"/>
    <property type="match status" value="1"/>
</dbReference>
<dbReference type="PRINTS" id="PR00449">
    <property type="entry name" value="RASTRNSFRMNG"/>
</dbReference>
<dbReference type="SMART" id="SM00175">
    <property type="entry name" value="RAB"/>
    <property type="match status" value="1"/>
</dbReference>
<dbReference type="SMART" id="SM00173">
    <property type="entry name" value="RAS"/>
    <property type="match status" value="1"/>
</dbReference>
<dbReference type="SUPFAM" id="SSF52540">
    <property type="entry name" value="P-loop containing nucleoside triphosphate hydrolases"/>
    <property type="match status" value="1"/>
</dbReference>
<dbReference type="PROSITE" id="PS51421">
    <property type="entry name" value="RAS"/>
    <property type="match status" value="1"/>
</dbReference>
<reference key="1">
    <citation type="submission" date="1998-08" db="EMBL/GenBank/DDBJ databases">
        <title>Cloning of the mouse Rad gene.</title>
        <authorList>
            <person name="Finlin B.S."/>
            <person name="Andres D.A."/>
        </authorList>
    </citation>
    <scope>NUCLEOTIDE SEQUENCE [MRNA]</scope>
</reference>
<reference key="2">
    <citation type="journal article" date="2007" name="Circulation">
        <title>Rad GTPase deficiency leads to cardiac hypertrophy.</title>
        <authorList>
            <person name="Chang L."/>
            <person name="Zhang J."/>
            <person name="Tseng Y.-H."/>
            <person name="Xie C.-Q."/>
            <person name="Ilany J."/>
            <person name="Bruning J.C."/>
            <person name="Sun Z."/>
            <person name="Zhu X."/>
            <person name="Cui T."/>
            <person name="Youker K.A."/>
            <person name="Yang Q."/>
            <person name="Day S.M."/>
            <person name="Kahn C.R."/>
            <person name="Chen Y.E."/>
        </authorList>
    </citation>
    <scope>FUNCTION</scope>
    <scope>DISRUPTION PHENOTYPE</scope>
</reference>
<reference key="3">
    <citation type="journal article" date="2007" name="Circ. Res.">
        <title>Dominant negative suppression of Rad leads to QT prolongation and causes ventricular arrhythmias via modulation of L-type Ca2+ channels in the heart.</title>
        <authorList>
            <person name="Yada H."/>
            <person name="Murata M."/>
            <person name="Shimoda K."/>
            <person name="Yuasa S."/>
            <person name="Kawaguchi H."/>
            <person name="Ieda M."/>
            <person name="Adachi T."/>
            <person name="Murata M."/>
            <person name="Ogawa S."/>
            <person name="Fukuda K."/>
        </authorList>
    </citation>
    <scope>FUNCTION</scope>
    <scope>INTERACTION WITH CACNB2</scope>
    <scope>SUBCELLULAR LOCATION</scope>
    <scope>MUTAGENESIS OF SER-105</scope>
</reference>
<reference key="4">
    <citation type="journal article" date="2010" name="Cell">
        <title>A tissue-specific atlas of mouse protein phosphorylation and expression.</title>
        <authorList>
            <person name="Huttlin E.L."/>
            <person name="Jedrychowski M.P."/>
            <person name="Elias J.E."/>
            <person name="Goswami T."/>
            <person name="Rad R."/>
            <person name="Beausoleil S.A."/>
            <person name="Villen J."/>
            <person name="Haas W."/>
            <person name="Sowa M.E."/>
            <person name="Gygi S.P."/>
        </authorList>
    </citation>
    <scope>PHOSPHORYLATION [LARGE SCALE ANALYSIS] AT SER-26</scope>
    <scope>IDENTIFICATION BY MASS SPECTROMETRY [LARGE SCALE ANALYSIS]</scope>
    <source>
        <tissue>Heart</tissue>
    </source>
</reference>
<reference key="5">
    <citation type="journal article" date="2014" name="Mol. Cell. Proteomics">
        <title>Immunoaffinity enrichment and mass spectrometry analysis of protein methylation.</title>
        <authorList>
            <person name="Guo A."/>
            <person name="Gu H."/>
            <person name="Zhou J."/>
            <person name="Mulhern D."/>
            <person name="Wang Y."/>
            <person name="Lee K.A."/>
            <person name="Yang V."/>
            <person name="Aguiar M."/>
            <person name="Kornhauser J."/>
            <person name="Jia X."/>
            <person name="Ren J."/>
            <person name="Beausoleil S.A."/>
            <person name="Silva J.C."/>
            <person name="Vemulapalli V."/>
            <person name="Bedford M.T."/>
            <person name="Comb M.J."/>
        </authorList>
    </citation>
    <scope>METHYLATION [LARGE SCALE ANALYSIS] AT ARG-24</scope>
    <scope>IDENTIFICATION BY MASS SPECTROMETRY [LARGE SCALE ANALYSIS]</scope>
    <source>
        <tissue>Brain</tissue>
    </source>
</reference>
<reference key="6">
    <citation type="journal article" date="2022" name="Nat. Cardiovasc. Res.">
        <title>Rad regulation of CaV1.2 channels controls cardiac fight-or-flight response.</title>
        <authorList>
            <person name="Papa A."/>
            <person name="Zakharov S.I."/>
            <person name="Katchman A.N."/>
            <person name="Kushner J.S."/>
            <person name="Chen B.X."/>
            <person name="Yang L."/>
            <person name="Liu G."/>
            <person name="Jimenez A.S."/>
            <person name="Eisert R.J."/>
            <person name="Bradshaw G.A."/>
            <person name="Dun W."/>
            <person name="Ali S.R."/>
            <person name="Rodriques A."/>
            <person name="Zhou K."/>
            <person name="Topkara V."/>
            <person name="Yang M."/>
            <person name="Morrow J.P."/>
            <person name="Tsai E.J."/>
            <person name="Karlin A."/>
            <person name="Wan E."/>
            <person name="Kalocsay M."/>
            <person name="Pitt G.S."/>
            <person name="Colecraft H.M."/>
            <person name="Ben-Johny M."/>
            <person name="Marx S.O."/>
        </authorList>
    </citation>
    <scope>FUNCTION</scope>
    <scope>INTERACTION WITH CACNB2</scope>
    <scope>PHOSPHORYLATION</scope>
    <scope>MUTAGENESIS OF SER-26; SER-39; SER-273 AND SER-301</scope>
</reference>
<proteinExistence type="evidence at protein level"/>
<evidence type="ECO:0000250" key="1"/>
<evidence type="ECO:0000250" key="2">
    <source>
        <dbReference type="UniProtKB" id="P55042"/>
    </source>
</evidence>
<evidence type="ECO:0000256" key="3">
    <source>
        <dbReference type="SAM" id="MobiDB-lite"/>
    </source>
</evidence>
<evidence type="ECO:0000269" key="4">
    <source>
    </source>
</evidence>
<evidence type="ECO:0000269" key="5">
    <source>
    </source>
</evidence>
<evidence type="ECO:0000269" key="6">
    <source>
    </source>
</evidence>
<evidence type="ECO:0000305" key="7"/>
<evidence type="ECO:0007744" key="8">
    <source>
    </source>
</evidence>
<evidence type="ECO:0007744" key="9">
    <source>
    </source>
</evidence>
<name>RAD_MOUSE</name>